<keyword id="KW-0067">ATP-binding</keyword>
<keyword id="KW-0173">Coenzyme A biosynthesis</keyword>
<keyword id="KW-0963">Cytoplasm</keyword>
<keyword id="KW-0418">Kinase</keyword>
<keyword id="KW-0547">Nucleotide-binding</keyword>
<keyword id="KW-0630">Potassium</keyword>
<keyword id="KW-0808">Transferase</keyword>
<feature type="chain" id="PRO_0000270913" description="Type III pantothenate kinase">
    <location>
        <begin position="1"/>
        <end position="242"/>
    </location>
</feature>
<feature type="active site" description="Proton acceptor" evidence="1">
    <location>
        <position position="100"/>
    </location>
</feature>
<feature type="binding site" evidence="1">
    <location>
        <begin position="7"/>
        <end position="14"/>
    </location>
    <ligand>
        <name>ATP</name>
        <dbReference type="ChEBI" id="CHEBI:30616"/>
    </ligand>
</feature>
<feature type="binding site" evidence="1">
    <location>
        <position position="91"/>
    </location>
    <ligand>
        <name>substrate</name>
    </ligand>
</feature>
<feature type="binding site" evidence="1">
    <location>
        <begin position="98"/>
        <end position="101"/>
    </location>
    <ligand>
        <name>substrate</name>
    </ligand>
</feature>
<feature type="binding site" evidence="1">
    <location>
        <position position="121"/>
    </location>
    <ligand>
        <name>ATP</name>
        <dbReference type="ChEBI" id="CHEBI:30616"/>
    </ligand>
</feature>
<feature type="binding site" evidence="1">
    <location>
        <position position="171"/>
    </location>
    <ligand>
        <name>substrate</name>
    </ligand>
</feature>
<organism>
    <name type="scientific">Xanthomonas oryzae pv. oryzae (strain MAFF 311018)</name>
    <dbReference type="NCBI Taxonomy" id="342109"/>
    <lineage>
        <taxon>Bacteria</taxon>
        <taxon>Pseudomonadati</taxon>
        <taxon>Pseudomonadota</taxon>
        <taxon>Gammaproteobacteria</taxon>
        <taxon>Lysobacterales</taxon>
        <taxon>Lysobacteraceae</taxon>
        <taxon>Xanthomonas</taxon>
    </lineage>
</organism>
<dbReference type="EC" id="2.7.1.33" evidence="1"/>
<dbReference type="EMBL" id="AP008229">
    <property type="protein sequence ID" value="BAE67146.1"/>
    <property type="molecule type" value="Genomic_DNA"/>
</dbReference>
<dbReference type="RefSeq" id="WP_011257361.1">
    <property type="nucleotide sequence ID" value="NC_007705.1"/>
</dbReference>
<dbReference type="SMR" id="Q2P8I1"/>
<dbReference type="KEGG" id="xom:XOO0391"/>
<dbReference type="HOGENOM" id="CLU_066627_0_0_6"/>
<dbReference type="UniPathway" id="UPA00241">
    <property type="reaction ID" value="UER00352"/>
</dbReference>
<dbReference type="GO" id="GO:0005737">
    <property type="term" value="C:cytoplasm"/>
    <property type="evidence" value="ECO:0007669"/>
    <property type="project" value="UniProtKB-SubCell"/>
</dbReference>
<dbReference type="GO" id="GO:0005524">
    <property type="term" value="F:ATP binding"/>
    <property type="evidence" value="ECO:0007669"/>
    <property type="project" value="UniProtKB-UniRule"/>
</dbReference>
<dbReference type="GO" id="GO:0004594">
    <property type="term" value="F:pantothenate kinase activity"/>
    <property type="evidence" value="ECO:0007669"/>
    <property type="project" value="UniProtKB-UniRule"/>
</dbReference>
<dbReference type="GO" id="GO:0015937">
    <property type="term" value="P:coenzyme A biosynthetic process"/>
    <property type="evidence" value="ECO:0007669"/>
    <property type="project" value="UniProtKB-UniRule"/>
</dbReference>
<dbReference type="CDD" id="cd24015">
    <property type="entry name" value="ASKHA_NBD_PanK-III"/>
    <property type="match status" value="1"/>
</dbReference>
<dbReference type="Gene3D" id="3.30.420.40">
    <property type="match status" value="2"/>
</dbReference>
<dbReference type="HAMAP" id="MF_01274">
    <property type="entry name" value="Pantothen_kinase_3"/>
    <property type="match status" value="1"/>
</dbReference>
<dbReference type="InterPro" id="IPR043129">
    <property type="entry name" value="ATPase_NBD"/>
</dbReference>
<dbReference type="InterPro" id="IPR004619">
    <property type="entry name" value="Type_III_PanK"/>
</dbReference>
<dbReference type="NCBIfam" id="TIGR00671">
    <property type="entry name" value="baf"/>
    <property type="match status" value="1"/>
</dbReference>
<dbReference type="NCBIfam" id="NF009864">
    <property type="entry name" value="PRK13327.1"/>
    <property type="match status" value="1"/>
</dbReference>
<dbReference type="PANTHER" id="PTHR34265">
    <property type="entry name" value="TYPE III PANTOTHENATE KINASE"/>
    <property type="match status" value="1"/>
</dbReference>
<dbReference type="PANTHER" id="PTHR34265:SF1">
    <property type="entry name" value="TYPE III PANTOTHENATE KINASE"/>
    <property type="match status" value="1"/>
</dbReference>
<dbReference type="Pfam" id="PF03309">
    <property type="entry name" value="Pan_kinase"/>
    <property type="match status" value="1"/>
</dbReference>
<dbReference type="SUPFAM" id="SSF53067">
    <property type="entry name" value="Actin-like ATPase domain"/>
    <property type="match status" value="2"/>
</dbReference>
<comment type="function">
    <text evidence="1">Catalyzes the phosphorylation of pantothenate (Pan), the first step in CoA biosynthesis.</text>
</comment>
<comment type="catalytic activity">
    <reaction evidence="1">
        <text>(R)-pantothenate + ATP = (R)-4'-phosphopantothenate + ADP + H(+)</text>
        <dbReference type="Rhea" id="RHEA:16373"/>
        <dbReference type="ChEBI" id="CHEBI:10986"/>
        <dbReference type="ChEBI" id="CHEBI:15378"/>
        <dbReference type="ChEBI" id="CHEBI:29032"/>
        <dbReference type="ChEBI" id="CHEBI:30616"/>
        <dbReference type="ChEBI" id="CHEBI:456216"/>
        <dbReference type="EC" id="2.7.1.33"/>
    </reaction>
</comment>
<comment type="cofactor">
    <cofactor evidence="1">
        <name>NH4(+)</name>
        <dbReference type="ChEBI" id="CHEBI:28938"/>
    </cofactor>
    <cofactor evidence="1">
        <name>K(+)</name>
        <dbReference type="ChEBI" id="CHEBI:29103"/>
    </cofactor>
    <text evidence="1">A monovalent cation. Ammonium or potassium.</text>
</comment>
<comment type="pathway">
    <text evidence="1">Cofactor biosynthesis; coenzyme A biosynthesis; CoA from (R)-pantothenate: step 1/5.</text>
</comment>
<comment type="subunit">
    <text evidence="1">Homodimer.</text>
</comment>
<comment type="subcellular location">
    <subcellularLocation>
        <location evidence="1">Cytoplasm</location>
    </subcellularLocation>
</comment>
<comment type="similarity">
    <text evidence="1">Belongs to the type III pantothenate kinase family.</text>
</comment>
<evidence type="ECO:0000255" key="1">
    <source>
        <dbReference type="HAMAP-Rule" id="MF_01274"/>
    </source>
</evidence>
<protein>
    <recommendedName>
        <fullName evidence="1">Type III pantothenate kinase</fullName>
        <ecNumber evidence="1">2.7.1.33</ecNumber>
    </recommendedName>
    <alternativeName>
        <fullName evidence="1">PanK-III</fullName>
    </alternativeName>
    <alternativeName>
        <fullName evidence="1">Pantothenic acid kinase</fullName>
    </alternativeName>
</protein>
<reference key="1">
    <citation type="journal article" date="2005" name="Jpn. Agric. Res. Q.">
        <title>Genome sequence of Xanthomonas oryzae pv. oryzae suggests contribution of large numbers of effector genes and insertion sequences to its race diversity.</title>
        <authorList>
            <person name="Ochiai H."/>
            <person name="Inoue Y."/>
            <person name="Takeya M."/>
            <person name="Sasaki A."/>
            <person name="Kaku H."/>
        </authorList>
    </citation>
    <scope>NUCLEOTIDE SEQUENCE [LARGE SCALE GENOMIC DNA]</scope>
    <source>
        <strain>MAFF 311018</strain>
    </source>
</reference>
<name>COAX_XANOM</name>
<sequence length="242" mass="24805">MSEWLFDLGNSRFKYAPLHGNRAGQVQAWAHGAEAMDAAALAALPSGQIAHVASVAAPALTQRMIACLQERFTQVRIVRTAAECAGIRIAYADPSRFGVDRFLALLGARGDAPVLVAGVGTALTIDVLGADGLHHGGCIAASPTTMREALHARAVQLPASGGDYVELAIDTDDALTSGCDGAAVALIERSLQHAQRSLGAPVRLLVHGGGAPPLLPLLPGATFRAALVLDGLATWATAAASP</sequence>
<accession>Q2P8I1</accession>
<gene>
    <name evidence="1" type="primary">coaX</name>
    <name type="ordered locus">XOO0391</name>
</gene>
<proteinExistence type="inferred from homology"/>